<organism>
    <name type="scientific">Salmonella arizonae (strain ATCC BAA-731 / CDC346-86 / RSK2980)</name>
    <dbReference type="NCBI Taxonomy" id="41514"/>
    <lineage>
        <taxon>Bacteria</taxon>
        <taxon>Pseudomonadati</taxon>
        <taxon>Pseudomonadota</taxon>
        <taxon>Gammaproteobacteria</taxon>
        <taxon>Enterobacterales</taxon>
        <taxon>Enterobacteriaceae</taxon>
        <taxon>Salmonella</taxon>
    </lineage>
</organism>
<comment type="function">
    <text evidence="1">Required for insertion of 4Fe-4S clusters for at least IspG.</text>
</comment>
<comment type="cofactor">
    <cofactor evidence="1">
        <name>iron-sulfur cluster</name>
        <dbReference type="ChEBI" id="CHEBI:30408"/>
    </cofactor>
    <text evidence="1">Binds 1 iron-sulfur cluster per subunit.</text>
</comment>
<comment type="subunit">
    <text evidence="1">Homodimer.</text>
</comment>
<comment type="similarity">
    <text evidence="1">Belongs to the HesB/IscA family.</text>
</comment>
<accession>A9MPK5</accession>
<reference key="1">
    <citation type="submission" date="2007-11" db="EMBL/GenBank/DDBJ databases">
        <authorList>
            <consortium name="The Salmonella enterica serovar Arizonae Genome Sequencing Project"/>
            <person name="McClelland M."/>
            <person name="Sanderson E.K."/>
            <person name="Porwollik S."/>
            <person name="Spieth J."/>
            <person name="Clifton W.S."/>
            <person name="Fulton R."/>
            <person name="Chunyan W."/>
            <person name="Wollam A."/>
            <person name="Shah N."/>
            <person name="Pepin K."/>
            <person name="Bhonagiri V."/>
            <person name="Nash W."/>
            <person name="Johnson M."/>
            <person name="Thiruvilangam P."/>
            <person name="Wilson R."/>
        </authorList>
    </citation>
    <scope>NUCLEOTIDE SEQUENCE [LARGE SCALE GENOMIC DNA]</scope>
    <source>
        <strain>ATCC BAA-731 / CDC346-86 / RSK2980</strain>
    </source>
</reference>
<keyword id="KW-0408">Iron</keyword>
<keyword id="KW-0411">Iron-sulfur</keyword>
<keyword id="KW-0479">Metal-binding</keyword>
<keyword id="KW-1185">Reference proteome</keyword>
<sequence>MSDDVALPLQFTDAAANKVKSLIADEDNPNLKLRVYITGGGCSGFQYGFTFDDQVNEGDMTIEKQGVGLVVDPMSLQYLVGGSVDYTEGLEGSRFIVTNPNAKSTCGCGSSFSI</sequence>
<gene>
    <name evidence="1" type="primary">erpA</name>
    <name type="ordered locus">SARI_02800</name>
</gene>
<evidence type="ECO:0000255" key="1">
    <source>
        <dbReference type="HAMAP-Rule" id="MF_01380"/>
    </source>
</evidence>
<dbReference type="EMBL" id="CP000880">
    <property type="protein sequence ID" value="ABX22648.1"/>
    <property type="molecule type" value="Genomic_DNA"/>
</dbReference>
<dbReference type="SMR" id="A9MPK5"/>
<dbReference type="STRING" id="41514.SARI_02800"/>
<dbReference type="KEGG" id="ses:SARI_02800"/>
<dbReference type="HOGENOM" id="CLU_069054_5_3_6"/>
<dbReference type="Proteomes" id="UP000002084">
    <property type="component" value="Chromosome"/>
</dbReference>
<dbReference type="GO" id="GO:0005829">
    <property type="term" value="C:cytosol"/>
    <property type="evidence" value="ECO:0007669"/>
    <property type="project" value="TreeGrafter"/>
</dbReference>
<dbReference type="GO" id="GO:0051537">
    <property type="term" value="F:2 iron, 2 sulfur cluster binding"/>
    <property type="evidence" value="ECO:0007669"/>
    <property type="project" value="TreeGrafter"/>
</dbReference>
<dbReference type="GO" id="GO:0051539">
    <property type="term" value="F:4 iron, 4 sulfur cluster binding"/>
    <property type="evidence" value="ECO:0007669"/>
    <property type="project" value="TreeGrafter"/>
</dbReference>
<dbReference type="GO" id="GO:0005506">
    <property type="term" value="F:iron ion binding"/>
    <property type="evidence" value="ECO:0007669"/>
    <property type="project" value="UniProtKB-UniRule"/>
</dbReference>
<dbReference type="GO" id="GO:0016226">
    <property type="term" value="P:iron-sulfur cluster assembly"/>
    <property type="evidence" value="ECO:0007669"/>
    <property type="project" value="UniProtKB-UniRule"/>
</dbReference>
<dbReference type="FunFam" id="2.60.300.12:FF:000002">
    <property type="entry name" value="Iron-sulfur cluster insertion protein ErpA"/>
    <property type="match status" value="1"/>
</dbReference>
<dbReference type="Gene3D" id="2.60.300.12">
    <property type="entry name" value="HesB-like domain"/>
    <property type="match status" value="1"/>
</dbReference>
<dbReference type="HAMAP" id="MF_01380">
    <property type="entry name" value="Fe_S_insert_ErpA"/>
    <property type="match status" value="1"/>
</dbReference>
<dbReference type="InterPro" id="IPR000361">
    <property type="entry name" value="FeS_biogenesis"/>
</dbReference>
<dbReference type="InterPro" id="IPR016092">
    <property type="entry name" value="FeS_cluster_insertion"/>
</dbReference>
<dbReference type="InterPro" id="IPR017870">
    <property type="entry name" value="FeS_cluster_insertion_CS"/>
</dbReference>
<dbReference type="InterPro" id="IPR023063">
    <property type="entry name" value="FeS_cluster_insertion_RrpA"/>
</dbReference>
<dbReference type="InterPro" id="IPR035903">
    <property type="entry name" value="HesB-like_dom_sf"/>
</dbReference>
<dbReference type="NCBIfam" id="TIGR00049">
    <property type="entry name" value="iron-sulfur cluster assembly accessory protein"/>
    <property type="match status" value="1"/>
</dbReference>
<dbReference type="NCBIfam" id="NF010147">
    <property type="entry name" value="PRK13623.1"/>
    <property type="match status" value="1"/>
</dbReference>
<dbReference type="PANTHER" id="PTHR43011">
    <property type="entry name" value="IRON-SULFUR CLUSTER ASSEMBLY 2 HOMOLOG, MITOCHONDRIAL"/>
    <property type="match status" value="1"/>
</dbReference>
<dbReference type="PANTHER" id="PTHR43011:SF1">
    <property type="entry name" value="IRON-SULFUR CLUSTER ASSEMBLY 2 HOMOLOG, MITOCHONDRIAL"/>
    <property type="match status" value="1"/>
</dbReference>
<dbReference type="Pfam" id="PF01521">
    <property type="entry name" value="Fe-S_biosyn"/>
    <property type="match status" value="1"/>
</dbReference>
<dbReference type="SUPFAM" id="SSF89360">
    <property type="entry name" value="HesB-like domain"/>
    <property type="match status" value="1"/>
</dbReference>
<dbReference type="PROSITE" id="PS01152">
    <property type="entry name" value="HESB"/>
    <property type="match status" value="1"/>
</dbReference>
<name>ERPA_SALAR</name>
<feature type="chain" id="PRO_1000144928" description="Iron-sulfur cluster insertion protein ErpA">
    <location>
        <begin position="1"/>
        <end position="114"/>
    </location>
</feature>
<feature type="binding site" evidence="1">
    <location>
        <position position="42"/>
    </location>
    <ligand>
        <name>iron-sulfur cluster</name>
        <dbReference type="ChEBI" id="CHEBI:30408"/>
    </ligand>
</feature>
<feature type="binding site" evidence="1">
    <location>
        <position position="106"/>
    </location>
    <ligand>
        <name>iron-sulfur cluster</name>
        <dbReference type="ChEBI" id="CHEBI:30408"/>
    </ligand>
</feature>
<feature type="binding site" evidence="1">
    <location>
        <position position="108"/>
    </location>
    <ligand>
        <name>iron-sulfur cluster</name>
        <dbReference type="ChEBI" id="CHEBI:30408"/>
    </ligand>
</feature>
<protein>
    <recommendedName>
        <fullName evidence="1">Iron-sulfur cluster insertion protein ErpA</fullName>
    </recommendedName>
</protein>
<proteinExistence type="inferred from homology"/>